<protein>
    <recommendedName>
        <fullName evidence="1">1-deoxy-D-xylulose-5-phosphate synthase</fullName>
        <ecNumber evidence="1">2.2.1.7</ecNumber>
    </recommendedName>
    <alternativeName>
        <fullName evidence="1">1-deoxyxylulose-5-phosphate synthase</fullName>
        <shortName evidence="1">DXP synthase</shortName>
        <shortName evidence="1">DXPS</shortName>
    </alternativeName>
</protein>
<feature type="chain" id="PRO_0000256450" description="1-deoxy-D-xylulose-5-phosphate synthase">
    <location>
        <begin position="1"/>
        <end position="634"/>
    </location>
</feature>
<feature type="binding site" evidence="1">
    <location>
        <position position="73"/>
    </location>
    <ligand>
        <name>thiamine diphosphate</name>
        <dbReference type="ChEBI" id="CHEBI:58937"/>
    </ligand>
</feature>
<feature type="binding site" evidence="1">
    <location>
        <begin position="114"/>
        <end position="116"/>
    </location>
    <ligand>
        <name>thiamine diphosphate</name>
        <dbReference type="ChEBI" id="CHEBI:58937"/>
    </ligand>
</feature>
<feature type="binding site" evidence="1">
    <location>
        <position position="145"/>
    </location>
    <ligand>
        <name>Mg(2+)</name>
        <dbReference type="ChEBI" id="CHEBI:18420"/>
    </ligand>
</feature>
<feature type="binding site" evidence="1">
    <location>
        <begin position="146"/>
        <end position="147"/>
    </location>
    <ligand>
        <name>thiamine diphosphate</name>
        <dbReference type="ChEBI" id="CHEBI:58937"/>
    </ligand>
</feature>
<feature type="binding site" evidence="1">
    <location>
        <position position="174"/>
    </location>
    <ligand>
        <name>Mg(2+)</name>
        <dbReference type="ChEBI" id="CHEBI:18420"/>
    </ligand>
</feature>
<feature type="binding site" evidence="1">
    <location>
        <position position="174"/>
    </location>
    <ligand>
        <name>thiamine diphosphate</name>
        <dbReference type="ChEBI" id="CHEBI:58937"/>
    </ligand>
</feature>
<feature type="binding site" evidence="1">
    <location>
        <position position="285"/>
    </location>
    <ligand>
        <name>thiamine diphosphate</name>
        <dbReference type="ChEBI" id="CHEBI:58937"/>
    </ligand>
</feature>
<feature type="binding site" evidence="1">
    <location>
        <position position="367"/>
    </location>
    <ligand>
        <name>thiamine diphosphate</name>
        <dbReference type="ChEBI" id="CHEBI:58937"/>
    </ligand>
</feature>
<evidence type="ECO:0000255" key="1">
    <source>
        <dbReference type="HAMAP-Rule" id="MF_00315"/>
    </source>
</evidence>
<proteinExistence type="inferred from homology"/>
<comment type="function">
    <text evidence="1">Catalyzes the acyloin condensation reaction between C atoms 2 and 3 of pyruvate and glyceraldehyde 3-phosphate to yield 1-deoxy-D-xylulose-5-phosphate (DXP).</text>
</comment>
<comment type="catalytic activity">
    <reaction evidence="1">
        <text>D-glyceraldehyde 3-phosphate + pyruvate + H(+) = 1-deoxy-D-xylulose 5-phosphate + CO2</text>
        <dbReference type="Rhea" id="RHEA:12605"/>
        <dbReference type="ChEBI" id="CHEBI:15361"/>
        <dbReference type="ChEBI" id="CHEBI:15378"/>
        <dbReference type="ChEBI" id="CHEBI:16526"/>
        <dbReference type="ChEBI" id="CHEBI:57792"/>
        <dbReference type="ChEBI" id="CHEBI:59776"/>
        <dbReference type="EC" id="2.2.1.7"/>
    </reaction>
</comment>
<comment type="cofactor">
    <cofactor evidence="1">
        <name>Mg(2+)</name>
        <dbReference type="ChEBI" id="CHEBI:18420"/>
    </cofactor>
    <text evidence="1">Binds 1 Mg(2+) ion per subunit.</text>
</comment>
<comment type="cofactor">
    <cofactor evidence="1">
        <name>thiamine diphosphate</name>
        <dbReference type="ChEBI" id="CHEBI:58937"/>
    </cofactor>
    <text evidence="1">Binds 1 thiamine pyrophosphate per subunit.</text>
</comment>
<comment type="pathway">
    <text evidence="1">Metabolic intermediate biosynthesis; 1-deoxy-D-xylulose 5-phosphate biosynthesis; 1-deoxy-D-xylulose 5-phosphate from D-glyceraldehyde 3-phosphate and pyruvate: step 1/1.</text>
</comment>
<comment type="subunit">
    <text evidence="1">Homodimer.</text>
</comment>
<comment type="similarity">
    <text evidence="1">Belongs to the transketolase family. DXPS subfamily.</text>
</comment>
<keyword id="KW-0414">Isoprene biosynthesis</keyword>
<keyword id="KW-0460">Magnesium</keyword>
<keyword id="KW-0479">Metal-binding</keyword>
<keyword id="KW-1185">Reference proteome</keyword>
<keyword id="KW-0784">Thiamine biosynthesis</keyword>
<keyword id="KW-0786">Thiamine pyrophosphate</keyword>
<keyword id="KW-0808">Transferase</keyword>
<accession>Q3A3Z6</accession>
<reference key="1">
    <citation type="submission" date="2005-10" db="EMBL/GenBank/DDBJ databases">
        <title>Complete sequence of Pelobacter carbinolicus DSM 2380.</title>
        <authorList>
            <person name="Copeland A."/>
            <person name="Lucas S."/>
            <person name="Lapidus A."/>
            <person name="Barry K."/>
            <person name="Detter J.C."/>
            <person name="Glavina T."/>
            <person name="Hammon N."/>
            <person name="Israni S."/>
            <person name="Pitluck S."/>
            <person name="Chertkov O."/>
            <person name="Schmutz J."/>
            <person name="Larimer F."/>
            <person name="Land M."/>
            <person name="Kyrpides N."/>
            <person name="Ivanova N."/>
            <person name="Richardson P."/>
        </authorList>
    </citation>
    <scope>NUCLEOTIDE SEQUENCE [LARGE SCALE GENOMIC DNA]</scope>
    <source>
        <strain>DSM 2380 / NBRC 103641 / GraBd1</strain>
    </source>
</reference>
<sequence length="634" mass="68237">MSMLKNLKSPAELKGLSVKELEVLAGEIRTKIIDTVSQTGGHLASSLGVVELTIALHHVLNTPVDKIVWDVGHQAYAHKLLTGRLDRFDTLRQLGGISGFPKREESPYDAFDVGHSSTSISAALGMAAARDCKNGKEKFVAVIGDGSLTGGMAFEALNQAGDQNKNLIVILNDNEMSISQNVGALSSLINRKMTSELVVRLKKEAENFLGHVPRIGKDLLKVARKAEESLKGFFTPGMLFEAFGFDYVGPLNGHRLETLIPALENVANLEGPVLVHVVTRKGKGFEPAEKNPSLFHGVGPFDKETGEVRASKGGPASFTGVFGSTLTAMAEKDDRIVAITAAMLEGTGLKEFSKRYPSRFFDVGIAEQHAVTFAAGLACQGMRPVVALYSTFLQRAYDNVVHDVALQRLPVTFAIDRGGLVGADGPTHHGVFDYSFLRHIPNMVVIAPRDEIELQRAMLTGTQHDGPLAYRYPRGKALGLELPDSVESMPIGKGEKLRDGSDAVIFALGVVCKEALVASDILAGEGLSVAVVDPRFLKPLDQQLLIAEARRTGVVVTVEENVRQGGFGSAVLEMLADEGLAVRVLRIGLPDRFIEQGTQQQLYARYGLDAEGIAASVRNFMHHDRGDASSTALA</sequence>
<organism>
    <name type="scientific">Syntrophotalea carbinolica (strain DSM 2380 / NBRC 103641 / GraBd1)</name>
    <name type="common">Pelobacter carbinolicus</name>
    <dbReference type="NCBI Taxonomy" id="338963"/>
    <lineage>
        <taxon>Bacteria</taxon>
        <taxon>Pseudomonadati</taxon>
        <taxon>Thermodesulfobacteriota</taxon>
        <taxon>Desulfuromonadia</taxon>
        <taxon>Desulfuromonadales</taxon>
        <taxon>Syntrophotaleaceae</taxon>
        <taxon>Syntrophotalea</taxon>
    </lineage>
</organism>
<dbReference type="EC" id="2.2.1.7" evidence="1"/>
<dbReference type="EMBL" id="CP000142">
    <property type="protein sequence ID" value="ABA88911.1"/>
    <property type="molecule type" value="Genomic_DNA"/>
</dbReference>
<dbReference type="SMR" id="Q3A3Z6"/>
<dbReference type="STRING" id="338963.Pcar_1667"/>
<dbReference type="KEGG" id="pca:Pcar_1667"/>
<dbReference type="eggNOG" id="COG1154">
    <property type="taxonomic scope" value="Bacteria"/>
</dbReference>
<dbReference type="HOGENOM" id="CLU_009227_1_4_7"/>
<dbReference type="OrthoDB" id="9803371at2"/>
<dbReference type="UniPathway" id="UPA00064">
    <property type="reaction ID" value="UER00091"/>
</dbReference>
<dbReference type="Proteomes" id="UP000002534">
    <property type="component" value="Chromosome"/>
</dbReference>
<dbReference type="GO" id="GO:0005829">
    <property type="term" value="C:cytosol"/>
    <property type="evidence" value="ECO:0007669"/>
    <property type="project" value="TreeGrafter"/>
</dbReference>
<dbReference type="GO" id="GO:0008661">
    <property type="term" value="F:1-deoxy-D-xylulose-5-phosphate synthase activity"/>
    <property type="evidence" value="ECO:0007669"/>
    <property type="project" value="UniProtKB-UniRule"/>
</dbReference>
<dbReference type="GO" id="GO:0000287">
    <property type="term" value="F:magnesium ion binding"/>
    <property type="evidence" value="ECO:0007669"/>
    <property type="project" value="UniProtKB-UniRule"/>
</dbReference>
<dbReference type="GO" id="GO:0030976">
    <property type="term" value="F:thiamine pyrophosphate binding"/>
    <property type="evidence" value="ECO:0007669"/>
    <property type="project" value="UniProtKB-UniRule"/>
</dbReference>
<dbReference type="GO" id="GO:0052865">
    <property type="term" value="P:1-deoxy-D-xylulose 5-phosphate biosynthetic process"/>
    <property type="evidence" value="ECO:0007669"/>
    <property type="project" value="UniProtKB-UniPathway"/>
</dbReference>
<dbReference type="GO" id="GO:0019288">
    <property type="term" value="P:isopentenyl diphosphate biosynthetic process, methylerythritol 4-phosphate pathway"/>
    <property type="evidence" value="ECO:0007669"/>
    <property type="project" value="TreeGrafter"/>
</dbReference>
<dbReference type="GO" id="GO:0016114">
    <property type="term" value="P:terpenoid biosynthetic process"/>
    <property type="evidence" value="ECO:0007669"/>
    <property type="project" value="UniProtKB-UniRule"/>
</dbReference>
<dbReference type="GO" id="GO:0009228">
    <property type="term" value="P:thiamine biosynthetic process"/>
    <property type="evidence" value="ECO:0007669"/>
    <property type="project" value="UniProtKB-UniRule"/>
</dbReference>
<dbReference type="CDD" id="cd02007">
    <property type="entry name" value="TPP_DXS"/>
    <property type="match status" value="1"/>
</dbReference>
<dbReference type="CDD" id="cd07033">
    <property type="entry name" value="TPP_PYR_DXS_TK_like"/>
    <property type="match status" value="1"/>
</dbReference>
<dbReference type="FunFam" id="3.40.50.920:FF:000002">
    <property type="entry name" value="1-deoxy-D-xylulose-5-phosphate synthase"/>
    <property type="match status" value="1"/>
</dbReference>
<dbReference type="FunFam" id="3.40.50.970:FF:000005">
    <property type="entry name" value="1-deoxy-D-xylulose-5-phosphate synthase"/>
    <property type="match status" value="1"/>
</dbReference>
<dbReference type="Gene3D" id="3.40.50.920">
    <property type="match status" value="1"/>
</dbReference>
<dbReference type="Gene3D" id="3.40.50.970">
    <property type="match status" value="2"/>
</dbReference>
<dbReference type="HAMAP" id="MF_00315">
    <property type="entry name" value="DXP_synth"/>
    <property type="match status" value="1"/>
</dbReference>
<dbReference type="InterPro" id="IPR005477">
    <property type="entry name" value="Dxylulose-5-P_synthase"/>
</dbReference>
<dbReference type="InterPro" id="IPR029061">
    <property type="entry name" value="THDP-binding"/>
</dbReference>
<dbReference type="InterPro" id="IPR009014">
    <property type="entry name" value="Transketo_C/PFOR_II"/>
</dbReference>
<dbReference type="InterPro" id="IPR005475">
    <property type="entry name" value="Transketolase-like_Pyr-bd"/>
</dbReference>
<dbReference type="InterPro" id="IPR020826">
    <property type="entry name" value="Transketolase_BS"/>
</dbReference>
<dbReference type="InterPro" id="IPR033248">
    <property type="entry name" value="Transketolase_C"/>
</dbReference>
<dbReference type="InterPro" id="IPR049557">
    <property type="entry name" value="Transketolase_CS"/>
</dbReference>
<dbReference type="NCBIfam" id="TIGR00204">
    <property type="entry name" value="dxs"/>
    <property type="match status" value="1"/>
</dbReference>
<dbReference type="NCBIfam" id="NF003933">
    <property type="entry name" value="PRK05444.2-2"/>
    <property type="match status" value="1"/>
</dbReference>
<dbReference type="PANTHER" id="PTHR43322">
    <property type="entry name" value="1-D-DEOXYXYLULOSE 5-PHOSPHATE SYNTHASE-RELATED"/>
    <property type="match status" value="1"/>
</dbReference>
<dbReference type="PANTHER" id="PTHR43322:SF5">
    <property type="entry name" value="1-DEOXY-D-XYLULOSE-5-PHOSPHATE SYNTHASE, CHLOROPLASTIC"/>
    <property type="match status" value="1"/>
</dbReference>
<dbReference type="Pfam" id="PF13292">
    <property type="entry name" value="DXP_synthase_N"/>
    <property type="match status" value="1"/>
</dbReference>
<dbReference type="Pfam" id="PF02779">
    <property type="entry name" value="Transket_pyr"/>
    <property type="match status" value="1"/>
</dbReference>
<dbReference type="Pfam" id="PF02780">
    <property type="entry name" value="Transketolase_C"/>
    <property type="match status" value="1"/>
</dbReference>
<dbReference type="SMART" id="SM00861">
    <property type="entry name" value="Transket_pyr"/>
    <property type="match status" value="1"/>
</dbReference>
<dbReference type="SUPFAM" id="SSF52518">
    <property type="entry name" value="Thiamin diphosphate-binding fold (THDP-binding)"/>
    <property type="match status" value="2"/>
</dbReference>
<dbReference type="SUPFAM" id="SSF52922">
    <property type="entry name" value="TK C-terminal domain-like"/>
    <property type="match status" value="1"/>
</dbReference>
<dbReference type="PROSITE" id="PS00801">
    <property type="entry name" value="TRANSKETOLASE_1"/>
    <property type="match status" value="1"/>
</dbReference>
<dbReference type="PROSITE" id="PS00802">
    <property type="entry name" value="TRANSKETOLASE_2"/>
    <property type="match status" value="1"/>
</dbReference>
<name>DXS_SYNC1</name>
<gene>
    <name evidence="1" type="primary">dxs</name>
    <name type="ordered locus">Pcar_1667</name>
</gene>